<reference key="1">
    <citation type="journal article" date="2005" name="Genome Res.">
        <title>Genome sequence of Blochmannia pennsylvanicus indicates parallel evolutionary trends among bacterial mutualists of insects.</title>
        <authorList>
            <person name="Degnan P.H."/>
            <person name="Lazarus A.B."/>
            <person name="Wernegreen J.J."/>
        </authorList>
    </citation>
    <scope>NUCLEOTIDE SEQUENCE [LARGE SCALE GENOMIC DNA]</scope>
    <source>
        <strain>BPEN</strain>
    </source>
</reference>
<protein>
    <recommendedName>
        <fullName evidence="1">DNA-directed RNA polymerase subunit omega</fullName>
        <shortName evidence="1">RNAP omega subunit</shortName>
        <ecNumber evidence="1">2.7.7.6</ecNumber>
    </recommendedName>
    <alternativeName>
        <fullName evidence="1">RNA polymerase omega subunit</fullName>
    </alternativeName>
    <alternativeName>
        <fullName evidence="1">Transcriptase subunit omega</fullName>
    </alternativeName>
</protein>
<gene>
    <name evidence="1" type="primary">rpoZ</name>
    <name type="ordered locus">BPEN_642</name>
</gene>
<keyword id="KW-0240">DNA-directed RNA polymerase</keyword>
<keyword id="KW-0548">Nucleotidyltransferase</keyword>
<keyword id="KW-1185">Reference proteome</keyword>
<keyword id="KW-0804">Transcription</keyword>
<keyword id="KW-0808">Transferase</keyword>
<evidence type="ECO:0000255" key="1">
    <source>
        <dbReference type="HAMAP-Rule" id="MF_00366"/>
    </source>
</evidence>
<organism>
    <name type="scientific">Blochmanniella pennsylvanica (strain BPEN)</name>
    <dbReference type="NCBI Taxonomy" id="291272"/>
    <lineage>
        <taxon>Bacteria</taxon>
        <taxon>Pseudomonadati</taxon>
        <taxon>Pseudomonadota</taxon>
        <taxon>Gammaproteobacteria</taxon>
        <taxon>Enterobacterales</taxon>
        <taxon>Enterobacteriaceae</taxon>
        <taxon>ant endosymbionts</taxon>
        <taxon>Candidatus Blochmanniella</taxon>
    </lineage>
</organism>
<dbReference type="EC" id="2.7.7.6" evidence="1"/>
<dbReference type="EMBL" id="CP000016">
    <property type="protein sequence ID" value="AAZ41240.1"/>
    <property type="molecule type" value="Genomic_DNA"/>
</dbReference>
<dbReference type="SMR" id="Q491W4"/>
<dbReference type="STRING" id="291272.BPEN_642"/>
<dbReference type="KEGG" id="bpn:BPEN_642"/>
<dbReference type="eggNOG" id="COG1758">
    <property type="taxonomic scope" value="Bacteria"/>
</dbReference>
<dbReference type="HOGENOM" id="CLU_125406_5_2_6"/>
<dbReference type="OrthoDB" id="9796300at2"/>
<dbReference type="Proteomes" id="UP000007794">
    <property type="component" value="Chromosome"/>
</dbReference>
<dbReference type="GO" id="GO:0000428">
    <property type="term" value="C:DNA-directed RNA polymerase complex"/>
    <property type="evidence" value="ECO:0007669"/>
    <property type="project" value="UniProtKB-KW"/>
</dbReference>
<dbReference type="GO" id="GO:0003677">
    <property type="term" value="F:DNA binding"/>
    <property type="evidence" value="ECO:0007669"/>
    <property type="project" value="UniProtKB-UniRule"/>
</dbReference>
<dbReference type="GO" id="GO:0003899">
    <property type="term" value="F:DNA-directed RNA polymerase activity"/>
    <property type="evidence" value="ECO:0007669"/>
    <property type="project" value="UniProtKB-UniRule"/>
</dbReference>
<dbReference type="GO" id="GO:0006351">
    <property type="term" value="P:DNA-templated transcription"/>
    <property type="evidence" value="ECO:0007669"/>
    <property type="project" value="UniProtKB-UniRule"/>
</dbReference>
<dbReference type="Gene3D" id="3.90.940.10">
    <property type="match status" value="1"/>
</dbReference>
<dbReference type="HAMAP" id="MF_00366">
    <property type="entry name" value="RNApol_bact_RpoZ"/>
    <property type="match status" value="1"/>
</dbReference>
<dbReference type="InterPro" id="IPR003716">
    <property type="entry name" value="DNA-dir_RNA_pol_omega"/>
</dbReference>
<dbReference type="InterPro" id="IPR006110">
    <property type="entry name" value="Pol_omega/Rpo6/RPB6"/>
</dbReference>
<dbReference type="InterPro" id="IPR036161">
    <property type="entry name" value="RPB6/omega-like_sf"/>
</dbReference>
<dbReference type="NCBIfam" id="TIGR00690">
    <property type="entry name" value="rpoZ"/>
    <property type="match status" value="1"/>
</dbReference>
<dbReference type="PANTHER" id="PTHR34476">
    <property type="entry name" value="DNA-DIRECTED RNA POLYMERASE SUBUNIT OMEGA"/>
    <property type="match status" value="1"/>
</dbReference>
<dbReference type="PANTHER" id="PTHR34476:SF1">
    <property type="entry name" value="DNA-DIRECTED RNA POLYMERASE SUBUNIT OMEGA"/>
    <property type="match status" value="1"/>
</dbReference>
<dbReference type="Pfam" id="PF01192">
    <property type="entry name" value="RNA_pol_Rpb6"/>
    <property type="match status" value="1"/>
</dbReference>
<dbReference type="SMART" id="SM01409">
    <property type="entry name" value="RNA_pol_Rpb6"/>
    <property type="match status" value="1"/>
</dbReference>
<dbReference type="SUPFAM" id="SSF63562">
    <property type="entry name" value="RPB6/omega subunit-like"/>
    <property type="match status" value="1"/>
</dbReference>
<feature type="chain" id="PRO_0000237438" description="DNA-directed RNA polymerase subunit omega">
    <location>
        <begin position="1"/>
        <end position="63"/>
    </location>
</feature>
<name>RPOZ_BLOPB</name>
<sequence>MARITVQDAVEKVGNIFDLILVAARRARQMQIGGKETLITKNNNDKYTVLALREIEEDLITKK</sequence>
<proteinExistence type="inferred from homology"/>
<accession>Q491W4</accession>
<comment type="function">
    <text evidence="1">Promotes RNA polymerase assembly. Latches the N- and C-terminal regions of the beta' subunit thereby facilitating its interaction with the beta and alpha subunits.</text>
</comment>
<comment type="catalytic activity">
    <reaction evidence="1">
        <text>RNA(n) + a ribonucleoside 5'-triphosphate = RNA(n+1) + diphosphate</text>
        <dbReference type="Rhea" id="RHEA:21248"/>
        <dbReference type="Rhea" id="RHEA-COMP:14527"/>
        <dbReference type="Rhea" id="RHEA-COMP:17342"/>
        <dbReference type="ChEBI" id="CHEBI:33019"/>
        <dbReference type="ChEBI" id="CHEBI:61557"/>
        <dbReference type="ChEBI" id="CHEBI:140395"/>
        <dbReference type="EC" id="2.7.7.6"/>
    </reaction>
</comment>
<comment type="subunit">
    <text evidence="1">The RNAP catalytic core consists of 2 alpha, 1 beta, 1 beta' and 1 omega subunit. When a sigma factor is associated with the core the holoenzyme is formed, which can initiate transcription.</text>
</comment>
<comment type="similarity">
    <text evidence="1">Belongs to the RNA polymerase subunit omega family.</text>
</comment>